<gene>
    <name evidence="1" type="primary">tsaD</name>
    <name type="synonym">gcp</name>
    <name type="ordered locus">DMR_21640</name>
</gene>
<comment type="function">
    <text evidence="1">Required for the formation of a threonylcarbamoyl group on adenosine at position 37 (t(6)A37) in tRNAs that read codons beginning with adenine. Is involved in the transfer of the threonylcarbamoyl moiety of threonylcarbamoyl-AMP (TC-AMP) to the N6 group of A37, together with TsaE and TsaB. TsaD likely plays a direct catalytic role in this reaction.</text>
</comment>
<comment type="catalytic activity">
    <reaction evidence="1">
        <text>L-threonylcarbamoyladenylate + adenosine(37) in tRNA = N(6)-L-threonylcarbamoyladenosine(37) in tRNA + AMP + H(+)</text>
        <dbReference type="Rhea" id="RHEA:37059"/>
        <dbReference type="Rhea" id="RHEA-COMP:10162"/>
        <dbReference type="Rhea" id="RHEA-COMP:10163"/>
        <dbReference type="ChEBI" id="CHEBI:15378"/>
        <dbReference type="ChEBI" id="CHEBI:73682"/>
        <dbReference type="ChEBI" id="CHEBI:74411"/>
        <dbReference type="ChEBI" id="CHEBI:74418"/>
        <dbReference type="ChEBI" id="CHEBI:456215"/>
        <dbReference type="EC" id="2.3.1.234"/>
    </reaction>
</comment>
<comment type="cofactor">
    <cofactor evidence="1">
        <name>Fe(2+)</name>
        <dbReference type="ChEBI" id="CHEBI:29033"/>
    </cofactor>
    <text evidence="1">Binds 1 Fe(2+) ion per subunit.</text>
</comment>
<comment type="subcellular location">
    <subcellularLocation>
        <location evidence="1">Cytoplasm</location>
    </subcellularLocation>
</comment>
<comment type="similarity">
    <text evidence="1">Belongs to the KAE1 / TsaD family.</text>
</comment>
<evidence type="ECO:0000255" key="1">
    <source>
        <dbReference type="HAMAP-Rule" id="MF_01445"/>
    </source>
</evidence>
<proteinExistence type="inferred from homology"/>
<feature type="chain" id="PRO_1000215297" description="tRNA N6-adenosine threonylcarbamoyltransferase">
    <location>
        <begin position="1"/>
        <end position="371"/>
    </location>
</feature>
<feature type="binding site" evidence="1">
    <location>
        <position position="110"/>
    </location>
    <ligand>
        <name>Fe cation</name>
        <dbReference type="ChEBI" id="CHEBI:24875"/>
    </ligand>
</feature>
<feature type="binding site" evidence="1">
    <location>
        <position position="114"/>
    </location>
    <ligand>
        <name>Fe cation</name>
        <dbReference type="ChEBI" id="CHEBI:24875"/>
    </ligand>
</feature>
<feature type="binding site" evidence="1">
    <location>
        <begin position="132"/>
        <end position="136"/>
    </location>
    <ligand>
        <name>substrate</name>
    </ligand>
</feature>
<feature type="binding site" evidence="1">
    <location>
        <position position="165"/>
    </location>
    <ligand>
        <name>substrate</name>
    </ligand>
</feature>
<feature type="binding site" evidence="1">
    <location>
        <position position="178"/>
    </location>
    <ligand>
        <name>substrate</name>
    </ligand>
</feature>
<feature type="binding site" evidence="1">
    <location>
        <position position="182"/>
    </location>
    <ligand>
        <name>substrate</name>
    </ligand>
</feature>
<feature type="binding site" evidence="1">
    <location>
        <position position="289"/>
    </location>
    <ligand>
        <name>substrate</name>
    </ligand>
</feature>
<feature type="binding site" evidence="1">
    <location>
        <position position="317"/>
    </location>
    <ligand>
        <name>Fe cation</name>
        <dbReference type="ChEBI" id="CHEBI:24875"/>
    </ligand>
</feature>
<dbReference type="EC" id="2.3.1.234" evidence="1"/>
<dbReference type="EMBL" id="AP010904">
    <property type="protein sequence ID" value="BAH75655.1"/>
    <property type="molecule type" value="Genomic_DNA"/>
</dbReference>
<dbReference type="RefSeq" id="WP_015860840.1">
    <property type="nucleotide sequence ID" value="NC_012796.1"/>
</dbReference>
<dbReference type="SMR" id="C4XSD3"/>
<dbReference type="STRING" id="573370.DMR_21640"/>
<dbReference type="KEGG" id="dma:DMR_21640"/>
<dbReference type="eggNOG" id="COG0533">
    <property type="taxonomic scope" value="Bacteria"/>
</dbReference>
<dbReference type="HOGENOM" id="CLU_023208_0_2_7"/>
<dbReference type="OrthoDB" id="9806197at2"/>
<dbReference type="Proteomes" id="UP000009071">
    <property type="component" value="Chromosome"/>
</dbReference>
<dbReference type="GO" id="GO:0005737">
    <property type="term" value="C:cytoplasm"/>
    <property type="evidence" value="ECO:0007669"/>
    <property type="project" value="UniProtKB-SubCell"/>
</dbReference>
<dbReference type="GO" id="GO:0005506">
    <property type="term" value="F:iron ion binding"/>
    <property type="evidence" value="ECO:0007669"/>
    <property type="project" value="UniProtKB-UniRule"/>
</dbReference>
<dbReference type="GO" id="GO:0061711">
    <property type="term" value="F:N(6)-L-threonylcarbamoyladenine synthase activity"/>
    <property type="evidence" value="ECO:0007669"/>
    <property type="project" value="UniProtKB-EC"/>
</dbReference>
<dbReference type="GO" id="GO:0002949">
    <property type="term" value="P:tRNA threonylcarbamoyladenosine modification"/>
    <property type="evidence" value="ECO:0007669"/>
    <property type="project" value="UniProtKB-UniRule"/>
</dbReference>
<dbReference type="FunFam" id="3.30.420.40:FF:000012">
    <property type="entry name" value="tRNA N6-adenosine threonylcarbamoyltransferase"/>
    <property type="match status" value="1"/>
</dbReference>
<dbReference type="Gene3D" id="3.30.420.40">
    <property type="match status" value="2"/>
</dbReference>
<dbReference type="HAMAP" id="MF_01445">
    <property type="entry name" value="TsaD"/>
    <property type="match status" value="1"/>
</dbReference>
<dbReference type="InterPro" id="IPR043129">
    <property type="entry name" value="ATPase_NBD"/>
</dbReference>
<dbReference type="InterPro" id="IPR000905">
    <property type="entry name" value="Gcp-like_dom"/>
</dbReference>
<dbReference type="InterPro" id="IPR017861">
    <property type="entry name" value="KAE1/TsaD"/>
</dbReference>
<dbReference type="InterPro" id="IPR022450">
    <property type="entry name" value="TsaD"/>
</dbReference>
<dbReference type="NCBIfam" id="TIGR00329">
    <property type="entry name" value="gcp_kae1"/>
    <property type="match status" value="1"/>
</dbReference>
<dbReference type="NCBIfam" id="TIGR03723">
    <property type="entry name" value="T6A_TsaD_YgjD"/>
    <property type="match status" value="1"/>
</dbReference>
<dbReference type="PANTHER" id="PTHR11735">
    <property type="entry name" value="TRNA N6-ADENOSINE THREONYLCARBAMOYLTRANSFERASE"/>
    <property type="match status" value="1"/>
</dbReference>
<dbReference type="PANTHER" id="PTHR11735:SF6">
    <property type="entry name" value="TRNA N6-ADENOSINE THREONYLCARBAMOYLTRANSFERASE, MITOCHONDRIAL"/>
    <property type="match status" value="1"/>
</dbReference>
<dbReference type="Pfam" id="PF00814">
    <property type="entry name" value="TsaD"/>
    <property type="match status" value="1"/>
</dbReference>
<dbReference type="PRINTS" id="PR00789">
    <property type="entry name" value="OSIALOPTASE"/>
</dbReference>
<dbReference type="SUPFAM" id="SSF53067">
    <property type="entry name" value="Actin-like ATPase domain"/>
    <property type="match status" value="2"/>
</dbReference>
<keyword id="KW-0012">Acyltransferase</keyword>
<keyword id="KW-0963">Cytoplasm</keyword>
<keyword id="KW-0408">Iron</keyword>
<keyword id="KW-0479">Metal-binding</keyword>
<keyword id="KW-0808">Transferase</keyword>
<keyword id="KW-0819">tRNA processing</keyword>
<reference key="1">
    <citation type="journal article" date="2009" name="Genome Res.">
        <title>Whole genome sequence of Desulfovibrio magneticus strain RS-1 revealed common gene clusters in magnetotactic bacteria.</title>
        <authorList>
            <person name="Nakazawa H."/>
            <person name="Arakaki A."/>
            <person name="Narita-Yamada S."/>
            <person name="Yashiro I."/>
            <person name="Jinno K."/>
            <person name="Aoki N."/>
            <person name="Tsuruyama A."/>
            <person name="Okamura Y."/>
            <person name="Tanikawa S."/>
            <person name="Fujita N."/>
            <person name="Takeyama H."/>
            <person name="Matsunaga T."/>
        </authorList>
    </citation>
    <scope>NUCLEOTIDE SEQUENCE [LARGE SCALE GENOMIC DNA]</scope>
    <source>
        <strain>ATCC 700980 / DSM 13731 / RS-1</strain>
    </source>
</reference>
<name>TSAD_SOLM1</name>
<accession>C4XSD3</accession>
<sequence>MLCLGIETSCDETAVALFENGRPVLEKLASQADLHAVFGGVVPELASREHLRRLGPLLQALFAASGRSLADVDAIAVARGPGLLGSLLVGLAAAKGLSLATGKPLIGVDHLHAHLLAATIGRDVAFPALGLLVSGGHTQIVRLESALSLEVLGRTLDDAAGEAFDKAAKSFNLPYPGGVYIDVLGRGIAPDKTLFPRPFLDNDHFDFSFSGLKTAVASYAAAHPELRAGSLAEAGGAIDPEAWPMALRRACSSLNFAIAETLRIKFERALDRQPGPPASLIAAGGVAANGPIRAMLADLAARRGLPLYLPEPALCADNAVMIAAAGSRLAEAGYAHDLALTAVPRGRKVPWDYAGGPSGKAASVDSASPAQ</sequence>
<organism>
    <name type="scientific">Solidesulfovibrio magneticus (strain ATCC 700980 / DSM 13731 / RS-1)</name>
    <name type="common">Desulfovibrio magneticus</name>
    <dbReference type="NCBI Taxonomy" id="573370"/>
    <lineage>
        <taxon>Bacteria</taxon>
        <taxon>Pseudomonadati</taxon>
        <taxon>Thermodesulfobacteriota</taxon>
        <taxon>Desulfovibrionia</taxon>
        <taxon>Desulfovibrionales</taxon>
        <taxon>Desulfovibrionaceae</taxon>
        <taxon>Solidesulfovibrio</taxon>
    </lineage>
</organism>
<protein>
    <recommendedName>
        <fullName evidence="1">tRNA N6-adenosine threonylcarbamoyltransferase</fullName>
        <ecNumber evidence="1">2.3.1.234</ecNumber>
    </recommendedName>
    <alternativeName>
        <fullName evidence="1">N6-L-threonylcarbamoyladenine synthase</fullName>
        <shortName evidence="1">t(6)A synthase</shortName>
    </alternativeName>
    <alternativeName>
        <fullName evidence="1">t(6)A37 threonylcarbamoyladenosine biosynthesis protein TsaD</fullName>
    </alternativeName>
    <alternativeName>
        <fullName evidence="1">tRNA threonylcarbamoyladenosine biosynthesis protein TsaD</fullName>
    </alternativeName>
</protein>